<feature type="transit peptide" description="Mitochondrion" evidence="1">
    <location>
        <begin position="1"/>
        <end position="16"/>
    </location>
</feature>
<feature type="chain" id="PRO_0000365067" description="Single-stranded DNA-binding protein, mitochondrial">
    <location>
        <begin position="17"/>
        <end position="148"/>
    </location>
</feature>
<feature type="domain" description="SSB">
    <location>
        <begin position="30"/>
        <end position="141"/>
    </location>
</feature>
<feature type="modified residue" description="Phosphoserine" evidence="2">
    <location>
        <position position="67"/>
    </location>
</feature>
<feature type="modified residue" description="Phosphoserine" evidence="1">
    <location>
        <position position="79"/>
    </location>
</feature>
<feature type="modified residue" description="N6-acetyllysine" evidence="1">
    <location>
        <position position="113"/>
    </location>
</feature>
<feature type="modified residue" description="N6-succinyllysine" evidence="2">
    <location>
        <position position="122"/>
    </location>
</feature>
<keyword id="KW-0007">Acetylation</keyword>
<keyword id="KW-0235">DNA replication</keyword>
<keyword id="KW-0238">DNA-binding</keyword>
<keyword id="KW-0496">Mitochondrion</keyword>
<keyword id="KW-1135">Mitochondrion nucleoid</keyword>
<keyword id="KW-0597">Phosphoprotein</keyword>
<keyword id="KW-1185">Reference proteome</keyword>
<keyword id="KW-0809">Transit peptide</keyword>
<reference key="1">
    <citation type="submission" date="2005-10" db="EMBL/GenBank/DDBJ databases">
        <authorList>
            <consortium name="NIH - Mammalian Gene Collection (MGC) project"/>
        </authorList>
    </citation>
    <scope>NUCLEOTIDE SEQUENCE [LARGE SCALE MRNA]</scope>
    <source>
        <strain>Crossbred X Angus</strain>
        <tissue>Liver</tissue>
    </source>
</reference>
<protein>
    <recommendedName>
        <fullName>Single-stranded DNA-binding protein, mitochondrial</fullName>
        <shortName>Mt-SSB</shortName>
        <shortName>MtSSB</shortName>
    </recommendedName>
</protein>
<name>SSBP_BOVIN</name>
<gene>
    <name type="primary">SSBP1</name>
</gene>
<proteinExistence type="evidence at transcript level"/>
<dbReference type="EMBL" id="BC108189">
    <property type="protein sequence ID" value="AAI08190.1"/>
    <property type="molecule type" value="mRNA"/>
</dbReference>
<dbReference type="RefSeq" id="NP_001032543.1">
    <property type="nucleotide sequence ID" value="NM_001037466.1"/>
</dbReference>
<dbReference type="SMR" id="Q32PB0"/>
<dbReference type="FunCoup" id="Q32PB0">
    <property type="interactions" value="2116"/>
</dbReference>
<dbReference type="STRING" id="9913.ENSBTAP00000014520"/>
<dbReference type="PaxDb" id="9913-ENSBTAP00000014520"/>
<dbReference type="PeptideAtlas" id="Q32PB0"/>
<dbReference type="GeneID" id="515765"/>
<dbReference type="KEGG" id="bta:515765"/>
<dbReference type="CTD" id="6742"/>
<dbReference type="eggNOG" id="KOG1653">
    <property type="taxonomic scope" value="Eukaryota"/>
</dbReference>
<dbReference type="InParanoid" id="Q32PB0"/>
<dbReference type="OrthoDB" id="1078367at2759"/>
<dbReference type="Proteomes" id="UP000009136">
    <property type="component" value="Unplaced"/>
</dbReference>
<dbReference type="GO" id="GO:0042645">
    <property type="term" value="C:mitochondrial nucleoid"/>
    <property type="evidence" value="ECO:0000250"/>
    <property type="project" value="UniProtKB"/>
</dbReference>
<dbReference type="GO" id="GO:0005739">
    <property type="term" value="C:mitochondrion"/>
    <property type="evidence" value="ECO:0000250"/>
    <property type="project" value="UniProtKB"/>
</dbReference>
<dbReference type="GO" id="GO:0003682">
    <property type="term" value="F:chromatin binding"/>
    <property type="evidence" value="ECO:0000250"/>
    <property type="project" value="UniProtKB"/>
</dbReference>
<dbReference type="GO" id="GO:0008047">
    <property type="term" value="F:enzyme activator activity"/>
    <property type="evidence" value="ECO:0000318"/>
    <property type="project" value="GO_Central"/>
</dbReference>
<dbReference type="GO" id="GO:0003697">
    <property type="term" value="F:single-stranded DNA binding"/>
    <property type="evidence" value="ECO:0000250"/>
    <property type="project" value="UniProtKB"/>
</dbReference>
<dbReference type="GO" id="GO:0006260">
    <property type="term" value="P:DNA replication"/>
    <property type="evidence" value="ECO:0000318"/>
    <property type="project" value="GO_Central"/>
</dbReference>
<dbReference type="GO" id="GO:0000002">
    <property type="term" value="P:mitochondrial genome maintenance"/>
    <property type="evidence" value="ECO:0000318"/>
    <property type="project" value="GO_Central"/>
</dbReference>
<dbReference type="GO" id="GO:0090297">
    <property type="term" value="P:positive regulation of mitochondrial DNA replication"/>
    <property type="evidence" value="ECO:0000250"/>
    <property type="project" value="UniProtKB"/>
</dbReference>
<dbReference type="GO" id="GO:0051289">
    <property type="term" value="P:protein homotetramerization"/>
    <property type="evidence" value="ECO:0000250"/>
    <property type="project" value="UniProtKB"/>
</dbReference>
<dbReference type="CDD" id="cd04496">
    <property type="entry name" value="SSB_OBF"/>
    <property type="match status" value="1"/>
</dbReference>
<dbReference type="FunFam" id="2.40.50.140:FF:000129">
    <property type="entry name" value="Single-stranded DNA-binding protein 1, mitochondrial"/>
    <property type="match status" value="1"/>
</dbReference>
<dbReference type="Gene3D" id="2.40.50.140">
    <property type="entry name" value="Nucleic acid-binding proteins"/>
    <property type="match status" value="1"/>
</dbReference>
<dbReference type="HAMAP" id="MF_00984">
    <property type="entry name" value="SSB"/>
    <property type="match status" value="1"/>
</dbReference>
<dbReference type="InterPro" id="IPR012340">
    <property type="entry name" value="NA-bd_OB-fold"/>
</dbReference>
<dbReference type="InterPro" id="IPR000424">
    <property type="entry name" value="Primosome_PriB/ssb"/>
</dbReference>
<dbReference type="InterPro" id="IPR011344">
    <property type="entry name" value="ssDNA-bd"/>
</dbReference>
<dbReference type="NCBIfam" id="TIGR00621">
    <property type="entry name" value="ssb"/>
    <property type="match status" value="1"/>
</dbReference>
<dbReference type="PANTHER" id="PTHR10302">
    <property type="entry name" value="SINGLE-STRANDED DNA-BINDING PROTEIN"/>
    <property type="match status" value="1"/>
</dbReference>
<dbReference type="PANTHER" id="PTHR10302:SF0">
    <property type="entry name" value="SINGLE-STRANDED DNA-BINDING PROTEIN, MITOCHONDRIAL"/>
    <property type="match status" value="1"/>
</dbReference>
<dbReference type="Pfam" id="PF00436">
    <property type="entry name" value="SSB"/>
    <property type="match status" value="1"/>
</dbReference>
<dbReference type="PIRSF" id="PIRSF002070">
    <property type="entry name" value="SSB"/>
    <property type="match status" value="1"/>
</dbReference>
<dbReference type="SUPFAM" id="SSF50249">
    <property type="entry name" value="Nucleic acid-binding proteins"/>
    <property type="match status" value="1"/>
</dbReference>
<dbReference type="PROSITE" id="PS50935">
    <property type="entry name" value="SSB"/>
    <property type="match status" value="1"/>
</dbReference>
<comment type="function">
    <text evidence="1">Binds preferentially and cooperatively to pyrimidine rich single-stranded DNA (ss-DNA). In vitro, required to maintain the copy number of mitochondrial DNA (mtDNA) and plays a crucial role during mtDNA replication by stimulating the activity of the replisome components POLG and TWNK at the replication fork. Promotes the activity of the gamma complex polymerase POLG, largely by organizing the template DNA and eliminating secondary structures to favor ss-DNA conformations that facilitate POLG activity. In addition it is able to promote the 5'-3' unwinding activity of the mtDNA helicase TWNK. May also function in mtDNA repair.</text>
</comment>
<comment type="subunit">
    <text evidence="1">Homotetramer. Interacts with MPG/AAG, through inhibition of its glycosylase activity it potentially prevents formation of DNA breaks in ssDNA, ensuring that base removal primarily occurs in dsDNA. Interacts with POLDIP2. Interacts with PRIMPOL.</text>
</comment>
<comment type="subcellular location">
    <subcellularLocation>
        <location evidence="1">Mitochondrion</location>
    </subcellularLocation>
    <subcellularLocation>
        <location evidence="1">Mitochondrion matrix</location>
        <location evidence="1">Mitochondrion nucleoid</location>
    </subcellularLocation>
</comment>
<sequence>MFRRPVVQVLRQFVRHESEVASSLVLERSLNRVQLLGRVGQDPVMRQVEGKNPDTIFSLATNEMWRSGENETYQMGDVSQKTTWHRISVFRPGLRDVAYQYVKKGSRIYVEGKVDYGEYTDKNNVRRQATTIIADNIIFLSDQIKEKP</sequence>
<accession>Q32PB0</accession>
<evidence type="ECO:0000250" key="1">
    <source>
        <dbReference type="UniProtKB" id="Q04837"/>
    </source>
</evidence>
<evidence type="ECO:0000250" key="2">
    <source>
        <dbReference type="UniProtKB" id="Q9CYR0"/>
    </source>
</evidence>
<organism>
    <name type="scientific">Bos taurus</name>
    <name type="common">Bovine</name>
    <dbReference type="NCBI Taxonomy" id="9913"/>
    <lineage>
        <taxon>Eukaryota</taxon>
        <taxon>Metazoa</taxon>
        <taxon>Chordata</taxon>
        <taxon>Craniata</taxon>
        <taxon>Vertebrata</taxon>
        <taxon>Euteleostomi</taxon>
        <taxon>Mammalia</taxon>
        <taxon>Eutheria</taxon>
        <taxon>Laurasiatheria</taxon>
        <taxon>Artiodactyla</taxon>
        <taxon>Ruminantia</taxon>
        <taxon>Pecora</taxon>
        <taxon>Bovidae</taxon>
        <taxon>Bovinae</taxon>
        <taxon>Bos</taxon>
    </lineage>
</organism>